<feature type="chain" id="PRO_0000060559" description="Cytochrome b">
    <location>
        <begin position="1"/>
        <end position="379"/>
    </location>
</feature>
<feature type="transmembrane region" description="Helical" evidence="2">
    <location>
        <begin position="33"/>
        <end position="53"/>
    </location>
</feature>
<feature type="transmembrane region" description="Helical" evidence="2">
    <location>
        <begin position="77"/>
        <end position="98"/>
    </location>
</feature>
<feature type="transmembrane region" description="Helical" evidence="2">
    <location>
        <begin position="113"/>
        <end position="133"/>
    </location>
</feature>
<feature type="transmembrane region" description="Helical" evidence="2">
    <location>
        <begin position="178"/>
        <end position="198"/>
    </location>
</feature>
<feature type="transmembrane region" description="Helical" evidence="2">
    <location>
        <begin position="226"/>
        <end position="246"/>
    </location>
</feature>
<feature type="transmembrane region" description="Helical" evidence="2">
    <location>
        <begin position="288"/>
        <end position="308"/>
    </location>
</feature>
<feature type="transmembrane region" description="Helical" evidence="2">
    <location>
        <begin position="320"/>
        <end position="340"/>
    </location>
</feature>
<feature type="transmembrane region" description="Helical" evidence="2">
    <location>
        <begin position="347"/>
        <end position="367"/>
    </location>
</feature>
<feature type="binding site" description="axial binding residue" evidence="2">
    <location>
        <position position="83"/>
    </location>
    <ligand>
        <name>heme b</name>
        <dbReference type="ChEBI" id="CHEBI:60344"/>
        <label>b562</label>
    </ligand>
    <ligandPart>
        <name>Fe</name>
        <dbReference type="ChEBI" id="CHEBI:18248"/>
    </ligandPart>
</feature>
<feature type="binding site" description="axial binding residue" evidence="2">
    <location>
        <position position="97"/>
    </location>
    <ligand>
        <name>heme b</name>
        <dbReference type="ChEBI" id="CHEBI:60344"/>
        <label>b566</label>
    </ligand>
    <ligandPart>
        <name>Fe</name>
        <dbReference type="ChEBI" id="CHEBI:18248"/>
    </ligandPart>
</feature>
<feature type="binding site" description="axial binding residue" evidence="2">
    <location>
        <position position="182"/>
    </location>
    <ligand>
        <name>heme b</name>
        <dbReference type="ChEBI" id="CHEBI:60344"/>
        <label>b562</label>
    </ligand>
    <ligandPart>
        <name>Fe</name>
        <dbReference type="ChEBI" id="CHEBI:18248"/>
    </ligandPart>
</feature>
<feature type="binding site" description="axial binding residue" evidence="2">
    <location>
        <position position="196"/>
    </location>
    <ligand>
        <name>heme b</name>
        <dbReference type="ChEBI" id="CHEBI:60344"/>
        <label>b566</label>
    </ligand>
    <ligandPart>
        <name>Fe</name>
        <dbReference type="ChEBI" id="CHEBI:18248"/>
    </ligandPart>
</feature>
<feature type="binding site" evidence="2">
    <location>
        <position position="201"/>
    </location>
    <ligand>
        <name>a ubiquinone</name>
        <dbReference type="ChEBI" id="CHEBI:16389"/>
    </ligand>
</feature>
<protein>
    <recommendedName>
        <fullName>Cytochrome b</fullName>
    </recommendedName>
    <alternativeName>
        <fullName>Complex III subunit 3</fullName>
    </alternativeName>
    <alternativeName>
        <fullName>Complex III subunit III</fullName>
    </alternativeName>
    <alternativeName>
        <fullName>Cytochrome b-c1 complex subunit 3</fullName>
    </alternativeName>
    <alternativeName>
        <fullName>Ubiquinol-cytochrome-c reductase complex cytochrome b subunit</fullName>
    </alternativeName>
</protein>
<sequence>MTNIRKTHPLMKIVNNAFIDLPAPSNISSWWNLGSLLGVCLILQILTGLFLAMHYTSDTMTAFSSVTHICRDVNYGWIIRYMHANGASMFFICLFMHVGRGLYYGSYTFLETWNIGVILLFTVMATAFVGYVLPWGQMSFWGATVITNLLSAIPYIGTNLVEWIWGGFSVDKATLTRFFAFHFILPFIIAALAMVHLLFLHETGSNNPTGIPSDADKIPFHPYYTIKDILGALLLTLFLMLLVLFSPDLLGDPDNYTPANPLNTPPHIKPEWYFLFAYAILRSIPNKLGGVLALVSSILILILMPLLHTSKQRSMMFRPFSQCLFWILVADLLTLTWIGGQPVEYPFITIGQLASILYFLIILVLMPVTSTIENNLLKW</sequence>
<organism>
    <name type="scientific">Alces alces alces</name>
    <name type="common">European moose</name>
    <name type="synonym">Elk</name>
    <dbReference type="NCBI Taxonomy" id="9853"/>
    <lineage>
        <taxon>Eukaryota</taxon>
        <taxon>Metazoa</taxon>
        <taxon>Chordata</taxon>
        <taxon>Craniata</taxon>
        <taxon>Vertebrata</taxon>
        <taxon>Euteleostomi</taxon>
        <taxon>Mammalia</taxon>
        <taxon>Eutheria</taxon>
        <taxon>Laurasiatheria</taxon>
        <taxon>Artiodactyla</taxon>
        <taxon>Ruminantia</taxon>
        <taxon>Pecora</taxon>
        <taxon>Cervidae</taxon>
        <taxon>Odocoileinae</taxon>
        <taxon>Alces</taxon>
    </lineage>
</organism>
<keyword id="KW-0249">Electron transport</keyword>
<keyword id="KW-0349">Heme</keyword>
<keyword id="KW-0408">Iron</keyword>
<keyword id="KW-0472">Membrane</keyword>
<keyword id="KW-0479">Metal-binding</keyword>
<keyword id="KW-0496">Mitochondrion</keyword>
<keyword id="KW-0999">Mitochondrion inner membrane</keyword>
<keyword id="KW-0679">Respiratory chain</keyword>
<keyword id="KW-0812">Transmembrane</keyword>
<keyword id="KW-1133">Transmembrane helix</keyword>
<keyword id="KW-0813">Transport</keyword>
<keyword id="KW-0830">Ubiquinone</keyword>
<accession>O47922</accession>
<dbReference type="EMBL" id="AJ000026">
    <property type="protein sequence ID" value="CAA03865.1"/>
    <property type="molecule type" value="Genomic_DNA"/>
</dbReference>
<dbReference type="SMR" id="O47922"/>
<dbReference type="GO" id="GO:0005743">
    <property type="term" value="C:mitochondrial inner membrane"/>
    <property type="evidence" value="ECO:0007669"/>
    <property type="project" value="UniProtKB-SubCell"/>
</dbReference>
<dbReference type="GO" id="GO:0045275">
    <property type="term" value="C:respiratory chain complex III"/>
    <property type="evidence" value="ECO:0007669"/>
    <property type="project" value="InterPro"/>
</dbReference>
<dbReference type="GO" id="GO:0046872">
    <property type="term" value="F:metal ion binding"/>
    <property type="evidence" value="ECO:0007669"/>
    <property type="project" value="UniProtKB-KW"/>
</dbReference>
<dbReference type="GO" id="GO:0008121">
    <property type="term" value="F:ubiquinol-cytochrome-c reductase activity"/>
    <property type="evidence" value="ECO:0007669"/>
    <property type="project" value="InterPro"/>
</dbReference>
<dbReference type="GO" id="GO:0006122">
    <property type="term" value="P:mitochondrial electron transport, ubiquinol to cytochrome c"/>
    <property type="evidence" value="ECO:0007669"/>
    <property type="project" value="TreeGrafter"/>
</dbReference>
<dbReference type="CDD" id="cd00290">
    <property type="entry name" value="cytochrome_b_C"/>
    <property type="match status" value="1"/>
</dbReference>
<dbReference type="CDD" id="cd00284">
    <property type="entry name" value="Cytochrome_b_N"/>
    <property type="match status" value="1"/>
</dbReference>
<dbReference type="FunFam" id="1.20.810.10:FF:000002">
    <property type="entry name" value="Cytochrome b"/>
    <property type="match status" value="1"/>
</dbReference>
<dbReference type="Gene3D" id="1.20.810.10">
    <property type="entry name" value="Cytochrome Bc1 Complex, Chain C"/>
    <property type="match status" value="1"/>
</dbReference>
<dbReference type="InterPro" id="IPR005798">
    <property type="entry name" value="Cyt_b/b6_C"/>
</dbReference>
<dbReference type="InterPro" id="IPR036150">
    <property type="entry name" value="Cyt_b/b6_C_sf"/>
</dbReference>
<dbReference type="InterPro" id="IPR005797">
    <property type="entry name" value="Cyt_b/b6_N"/>
</dbReference>
<dbReference type="InterPro" id="IPR027387">
    <property type="entry name" value="Cytb/b6-like_sf"/>
</dbReference>
<dbReference type="InterPro" id="IPR030689">
    <property type="entry name" value="Cytochrome_b"/>
</dbReference>
<dbReference type="InterPro" id="IPR048260">
    <property type="entry name" value="Cytochrome_b_C_euk/bac"/>
</dbReference>
<dbReference type="InterPro" id="IPR048259">
    <property type="entry name" value="Cytochrome_b_N_euk/bac"/>
</dbReference>
<dbReference type="InterPro" id="IPR016174">
    <property type="entry name" value="Di-haem_cyt_TM"/>
</dbReference>
<dbReference type="PANTHER" id="PTHR19271">
    <property type="entry name" value="CYTOCHROME B"/>
    <property type="match status" value="1"/>
</dbReference>
<dbReference type="PANTHER" id="PTHR19271:SF16">
    <property type="entry name" value="CYTOCHROME B"/>
    <property type="match status" value="1"/>
</dbReference>
<dbReference type="Pfam" id="PF00032">
    <property type="entry name" value="Cytochrom_B_C"/>
    <property type="match status" value="1"/>
</dbReference>
<dbReference type="Pfam" id="PF00033">
    <property type="entry name" value="Cytochrome_B"/>
    <property type="match status" value="1"/>
</dbReference>
<dbReference type="PIRSF" id="PIRSF038885">
    <property type="entry name" value="COB"/>
    <property type="match status" value="1"/>
</dbReference>
<dbReference type="SUPFAM" id="SSF81648">
    <property type="entry name" value="a domain/subunit of cytochrome bc1 complex (Ubiquinol-cytochrome c reductase)"/>
    <property type="match status" value="1"/>
</dbReference>
<dbReference type="SUPFAM" id="SSF81342">
    <property type="entry name" value="Transmembrane di-heme cytochromes"/>
    <property type="match status" value="1"/>
</dbReference>
<dbReference type="PROSITE" id="PS51003">
    <property type="entry name" value="CYTB_CTER"/>
    <property type="match status" value="1"/>
</dbReference>
<dbReference type="PROSITE" id="PS51002">
    <property type="entry name" value="CYTB_NTER"/>
    <property type="match status" value="1"/>
</dbReference>
<comment type="function">
    <text evidence="2">Component of the ubiquinol-cytochrome c reductase complex (complex III or cytochrome b-c1 complex) that is part of the mitochondrial respiratory chain. The b-c1 complex mediates electron transfer from ubiquinol to cytochrome c. Contributes to the generation of a proton gradient across the mitochondrial membrane that is then used for ATP synthesis.</text>
</comment>
<comment type="cofactor">
    <cofactor evidence="2">
        <name>heme b</name>
        <dbReference type="ChEBI" id="CHEBI:60344"/>
    </cofactor>
    <text evidence="2">Binds 2 heme b groups non-covalently.</text>
</comment>
<comment type="subunit">
    <text evidence="2">The cytochrome bc1 complex contains 11 subunits: 3 respiratory subunits (MT-CYB, CYC1 and UQCRFS1), 2 core proteins (UQCRC1 and UQCRC2) and 6 low-molecular weight proteins (UQCRH/QCR6, UQCRB/QCR7, UQCRQ/QCR8, UQCR10/QCR9, UQCR11/QCR10 and a cleavage product of UQCRFS1). This cytochrome bc1 complex then forms a dimer.</text>
</comment>
<comment type="subcellular location">
    <subcellularLocation>
        <location evidence="2">Mitochondrion inner membrane</location>
        <topology evidence="2">Multi-pass membrane protein</topology>
    </subcellularLocation>
</comment>
<comment type="miscellaneous">
    <text evidence="1">Heme 1 (or BL or b562) is low-potential and absorbs at about 562 nm, and heme 2 (or BH or b566) is high-potential and absorbs at about 566 nm.</text>
</comment>
<comment type="similarity">
    <text evidence="3 4">Belongs to the cytochrome b family.</text>
</comment>
<comment type="caution">
    <text evidence="2">The full-length protein contains only eight transmembrane helices, not nine as predicted by bioinformatics tools.</text>
</comment>
<gene>
    <name type="primary">MT-CYB</name>
    <name type="synonym">COB</name>
    <name type="synonym">CYTB</name>
    <name type="synonym">MTCYB</name>
</gene>
<name>CYB_ALCAA</name>
<evidence type="ECO:0000250" key="1"/>
<evidence type="ECO:0000250" key="2">
    <source>
        <dbReference type="UniProtKB" id="P00157"/>
    </source>
</evidence>
<evidence type="ECO:0000255" key="3">
    <source>
        <dbReference type="PROSITE-ProRule" id="PRU00967"/>
    </source>
</evidence>
<evidence type="ECO:0000255" key="4">
    <source>
        <dbReference type="PROSITE-ProRule" id="PRU00968"/>
    </source>
</evidence>
<geneLocation type="mitochondrion"/>
<proteinExistence type="inferred from homology"/>
<reference key="1">
    <citation type="journal article" date="1998" name="Proc. R. Soc. B">
        <title>New phylogenetic perspectives on the Cervidae (Artiodactyla) are provided by the mitochondrial cytochrome b gene.</title>
        <authorList>
            <person name="Randi E."/>
            <person name="Mucci N."/>
            <person name="Pierpaoli M."/>
            <person name="Douzery E.J.P."/>
        </authorList>
    </citation>
    <scope>NUCLEOTIDE SEQUENCE [GENOMIC DNA]</scope>
</reference>